<gene>
    <name evidence="1" type="primary">rbfA</name>
    <name type="ordered locus">CV_1463</name>
</gene>
<dbReference type="EMBL" id="AE016825">
    <property type="protein sequence ID" value="AAQ59138.2"/>
    <property type="molecule type" value="Genomic_DNA"/>
</dbReference>
<dbReference type="RefSeq" id="WP_011135015.1">
    <property type="nucleotide sequence ID" value="NC_005085.1"/>
</dbReference>
<dbReference type="SMR" id="Q7NY12"/>
<dbReference type="STRING" id="243365.CV_1463"/>
<dbReference type="GeneID" id="66367158"/>
<dbReference type="KEGG" id="cvi:CV_1463"/>
<dbReference type="eggNOG" id="COG0858">
    <property type="taxonomic scope" value="Bacteria"/>
</dbReference>
<dbReference type="HOGENOM" id="CLU_089475_5_0_4"/>
<dbReference type="OrthoDB" id="307788at2"/>
<dbReference type="Proteomes" id="UP000001424">
    <property type="component" value="Chromosome"/>
</dbReference>
<dbReference type="GO" id="GO:0005829">
    <property type="term" value="C:cytosol"/>
    <property type="evidence" value="ECO:0007669"/>
    <property type="project" value="TreeGrafter"/>
</dbReference>
<dbReference type="GO" id="GO:0043024">
    <property type="term" value="F:ribosomal small subunit binding"/>
    <property type="evidence" value="ECO:0007669"/>
    <property type="project" value="TreeGrafter"/>
</dbReference>
<dbReference type="GO" id="GO:0030490">
    <property type="term" value="P:maturation of SSU-rRNA"/>
    <property type="evidence" value="ECO:0007669"/>
    <property type="project" value="UniProtKB-UniRule"/>
</dbReference>
<dbReference type="Gene3D" id="3.30.300.20">
    <property type="match status" value="1"/>
</dbReference>
<dbReference type="HAMAP" id="MF_00003">
    <property type="entry name" value="RbfA"/>
    <property type="match status" value="1"/>
</dbReference>
<dbReference type="InterPro" id="IPR015946">
    <property type="entry name" value="KH_dom-like_a/b"/>
</dbReference>
<dbReference type="InterPro" id="IPR000238">
    <property type="entry name" value="RbfA"/>
</dbReference>
<dbReference type="InterPro" id="IPR023799">
    <property type="entry name" value="RbfA_dom_sf"/>
</dbReference>
<dbReference type="InterPro" id="IPR020053">
    <property type="entry name" value="Ribosome-bd_factorA_CS"/>
</dbReference>
<dbReference type="NCBIfam" id="TIGR00082">
    <property type="entry name" value="rbfA"/>
    <property type="match status" value="1"/>
</dbReference>
<dbReference type="PANTHER" id="PTHR33515">
    <property type="entry name" value="RIBOSOME-BINDING FACTOR A, CHLOROPLASTIC-RELATED"/>
    <property type="match status" value="1"/>
</dbReference>
<dbReference type="PANTHER" id="PTHR33515:SF1">
    <property type="entry name" value="RIBOSOME-BINDING FACTOR A, CHLOROPLASTIC-RELATED"/>
    <property type="match status" value="1"/>
</dbReference>
<dbReference type="Pfam" id="PF02033">
    <property type="entry name" value="RBFA"/>
    <property type="match status" value="1"/>
</dbReference>
<dbReference type="SUPFAM" id="SSF89919">
    <property type="entry name" value="Ribosome-binding factor A, RbfA"/>
    <property type="match status" value="1"/>
</dbReference>
<dbReference type="PROSITE" id="PS01319">
    <property type="entry name" value="RBFA"/>
    <property type="match status" value="1"/>
</dbReference>
<keyword id="KW-0963">Cytoplasm</keyword>
<keyword id="KW-1185">Reference proteome</keyword>
<keyword id="KW-0690">Ribosome biogenesis</keyword>
<organism>
    <name type="scientific">Chromobacterium violaceum (strain ATCC 12472 / DSM 30191 / JCM 1249 / CCUG 213 / NBRC 12614 / NCIMB 9131 / NCTC 9757 / MK)</name>
    <dbReference type="NCBI Taxonomy" id="243365"/>
    <lineage>
        <taxon>Bacteria</taxon>
        <taxon>Pseudomonadati</taxon>
        <taxon>Pseudomonadota</taxon>
        <taxon>Betaproteobacteria</taxon>
        <taxon>Neisseriales</taxon>
        <taxon>Chromobacteriaceae</taxon>
        <taxon>Chromobacterium</taxon>
    </lineage>
</organism>
<accession>Q7NY12</accession>
<protein>
    <recommendedName>
        <fullName evidence="1">Ribosome-binding factor A</fullName>
    </recommendedName>
</protein>
<reference key="1">
    <citation type="journal article" date="2003" name="Proc. Natl. Acad. Sci. U.S.A.">
        <title>The complete genome sequence of Chromobacterium violaceum reveals remarkable and exploitable bacterial adaptability.</title>
        <authorList>
            <person name="Vasconcelos A.T.R."/>
            <person name="de Almeida D.F."/>
            <person name="Hungria M."/>
            <person name="Guimaraes C.T."/>
            <person name="Antonio R.V."/>
            <person name="Almeida F.C."/>
            <person name="de Almeida L.G.P."/>
            <person name="de Almeida R."/>
            <person name="Alves-Gomes J.A."/>
            <person name="Andrade E.M."/>
            <person name="Araripe J."/>
            <person name="de Araujo M.F.F."/>
            <person name="Astolfi-Filho S."/>
            <person name="Azevedo V."/>
            <person name="Baptista A.J."/>
            <person name="Bataus L.A.M."/>
            <person name="Batista J.S."/>
            <person name="Belo A."/>
            <person name="van den Berg C."/>
            <person name="Bogo M."/>
            <person name="Bonatto S."/>
            <person name="Bordignon J."/>
            <person name="Brigido M.M."/>
            <person name="Brito C.A."/>
            <person name="Brocchi M."/>
            <person name="Burity H.A."/>
            <person name="Camargo A.A."/>
            <person name="Cardoso D.D.P."/>
            <person name="Carneiro N.P."/>
            <person name="Carraro D.M."/>
            <person name="Carvalho C.M.B."/>
            <person name="Cascardo J.C.M."/>
            <person name="Cavada B.S."/>
            <person name="Chueire L.M.O."/>
            <person name="Creczynski-Pasa T.B."/>
            <person name="Cunha-Junior N.C."/>
            <person name="Fagundes N."/>
            <person name="Falcao C.L."/>
            <person name="Fantinatti F."/>
            <person name="Farias I.P."/>
            <person name="Felipe M.S.S."/>
            <person name="Ferrari L.P."/>
            <person name="Ferro J.A."/>
            <person name="Ferro M.I.T."/>
            <person name="Franco G.R."/>
            <person name="Freitas N.S.A."/>
            <person name="Furlan L.R."/>
            <person name="Gazzinelli R.T."/>
            <person name="Gomes E.A."/>
            <person name="Goncalves P.R."/>
            <person name="Grangeiro T.B."/>
            <person name="Grattapaglia D."/>
            <person name="Grisard E.C."/>
            <person name="Hanna E.S."/>
            <person name="Jardim S.N."/>
            <person name="Laurino J."/>
            <person name="Leoi L.C.T."/>
            <person name="Lima L.F.A."/>
            <person name="Loureiro M.F."/>
            <person name="Lyra M.C.C.P."/>
            <person name="Madeira H.M.F."/>
            <person name="Manfio G.P."/>
            <person name="Maranhao A.Q."/>
            <person name="Martins W.S."/>
            <person name="di Mauro S.M.Z."/>
            <person name="de Medeiros S.R.B."/>
            <person name="Meissner R.V."/>
            <person name="Moreira M.A.M."/>
            <person name="Nascimento F.F."/>
            <person name="Nicolas M.F."/>
            <person name="Oliveira J.G."/>
            <person name="Oliveira S.C."/>
            <person name="Paixao R.F.C."/>
            <person name="Parente J.A."/>
            <person name="Pedrosa F.O."/>
            <person name="Pena S.D.J."/>
            <person name="Pereira J.O."/>
            <person name="Pereira M."/>
            <person name="Pinto L.S.R.C."/>
            <person name="Pinto L.S."/>
            <person name="Porto J.I.R."/>
            <person name="Potrich D.P."/>
            <person name="Ramalho-Neto C.E."/>
            <person name="Reis A.M.M."/>
            <person name="Rigo L.U."/>
            <person name="Rondinelli E."/>
            <person name="Santos E.B.P."/>
            <person name="Santos F.R."/>
            <person name="Schneider M.P.C."/>
            <person name="Seuanez H.N."/>
            <person name="Silva A.M.R."/>
            <person name="da Silva A.L.C."/>
            <person name="Silva D.W."/>
            <person name="Silva R."/>
            <person name="Simoes I.C."/>
            <person name="Simon D."/>
            <person name="Soares C.M.A."/>
            <person name="Soares R.B.A."/>
            <person name="Souza E.M."/>
            <person name="Souza K.R.L."/>
            <person name="Souza R.C."/>
            <person name="Steffens M.B.R."/>
            <person name="Steindel M."/>
            <person name="Teixeira S.R."/>
            <person name="Urmenyi T."/>
            <person name="Vettore A."/>
            <person name="Wassem R."/>
            <person name="Zaha A."/>
            <person name="Simpson A.J.G."/>
        </authorList>
    </citation>
    <scope>NUCLEOTIDE SEQUENCE [LARGE SCALE GENOMIC DNA]</scope>
    <source>
        <strain>ATCC 12472 / DSM 30191 / JCM 1249 / CCUG 213 / NBRC 12614 / NCIMB 9131 / NCTC 9757 / MK</strain>
    </source>
</reference>
<evidence type="ECO:0000255" key="1">
    <source>
        <dbReference type="HAMAP-Rule" id="MF_00003"/>
    </source>
</evidence>
<feature type="chain" id="PRO_0000102648" description="Ribosome-binding factor A">
    <location>
        <begin position="1"/>
        <end position="138"/>
    </location>
</feature>
<comment type="function">
    <text evidence="1">One of several proteins that assist in the late maturation steps of the functional core of the 30S ribosomal subunit. Associates with free 30S ribosomal subunits (but not with 30S subunits that are part of 70S ribosomes or polysomes). Required for efficient processing of 16S rRNA. May interact with the 5'-terminal helix region of 16S rRNA.</text>
</comment>
<comment type="subunit">
    <text evidence="1">Monomer. Binds 30S ribosomal subunits, but not 50S ribosomal subunits or 70S ribosomes.</text>
</comment>
<comment type="subcellular location">
    <subcellularLocation>
        <location evidence="1">Cytoplasm</location>
    </subcellularLocation>
</comment>
<comment type="similarity">
    <text evidence="1">Belongs to the RbfA family.</text>
</comment>
<name>RBFA_CHRVO</name>
<sequence length="138" mass="15387">MAKAKKGFSRSDRVAEQIQRELAELTRKGLKDPRAGWITITAVEVTRDYSHAKVYYTVMVDSTREATQEALDSSAGYLRNELGRAIKMFSMPQLHFVYDDSVERGMHLTSLINQVAREDAEKFGEAAAGEAEGEGKAE</sequence>
<proteinExistence type="inferred from homology"/>